<organism>
    <name type="scientific">Thermus thermophilus (strain ATCC BAA-163 / DSM 7039 / HB27)</name>
    <dbReference type="NCBI Taxonomy" id="262724"/>
    <lineage>
        <taxon>Bacteria</taxon>
        <taxon>Thermotogati</taxon>
        <taxon>Deinococcota</taxon>
        <taxon>Deinococci</taxon>
        <taxon>Thermales</taxon>
        <taxon>Thermaceae</taxon>
        <taxon>Thermus</taxon>
    </lineage>
</organism>
<reference key="1">
    <citation type="journal article" date="2004" name="Nat. Biotechnol.">
        <title>The genome sequence of the extreme thermophile Thermus thermophilus.</title>
        <authorList>
            <person name="Henne A."/>
            <person name="Brueggemann H."/>
            <person name="Raasch C."/>
            <person name="Wiezer A."/>
            <person name="Hartsch T."/>
            <person name="Liesegang H."/>
            <person name="Johann A."/>
            <person name="Lienard T."/>
            <person name="Gohl O."/>
            <person name="Martinez-Arias R."/>
            <person name="Jacobi C."/>
            <person name="Starkuviene V."/>
            <person name="Schlenczeck S."/>
            <person name="Dencker S."/>
            <person name="Huber R."/>
            <person name="Klenk H.-P."/>
            <person name="Kramer W."/>
            <person name="Merkl R."/>
            <person name="Gottschalk G."/>
            <person name="Fritz H.-J."/>
        </authorList>
    </citation>
    <scope>NUCLEOTIDE SEQUENCE [LARGE SCALE GENOMIC DNA]</scope>
    <source>
        <strain>ATCC BAA-163 / DSM 7039 / HB27</strain>
    </source>
</reference>
<proteinExistence type="inferred from homology"/>
<protein>
    <recommendedName>
        <fullName evidence="1">Elongation factor Ts</fullName>
        <shortName evidence="1">EF-Ts</shortName>
    </recommendedName>
</protein>
<sequence length="196" mass="22383">MSQTELIKKLREATGAGMMDVKRALEDAGWDEEKAVQLLRERGAMKAAKKADREAREGIIGHYIHHNQRVGVLVELNCETDFVARNELFQNLAKDLAMHIAMMNPRYVSAEEIPAEELEKERQIYIQAALNEGKPQQIAEKIAEGRLKKYLEEVVLLEQPFVKDDKVKVKELIQQAIAKIGENIVVRRFCRFELGA</sequence>
<gene>
    <name evidence="1" type="primary">tsf</name>
    <name type="ordered locus">TT_C0508</name>
</gene>
<name>EFTS_THET2</name>
<feature type="chain" id="PRO_0000161221" description="Elongation factor Ts">
    <location>
        <begin position="1"/>
        <end position="196"/>
    </location>
</feature>
<feature type="region of interest" description="Involved in Mg(2+) ion dislocation from EF-Tu" evidence="1">
    <location>
        <begin position="80"/>
        <end position="83"/>
    </location>
</feature>
<accession>Q72KD8</accession>
<comment type="function">
    <text evidence="1">Associates with the EF-Tu.GDP complex and induces the exchange of GDP to GTP. It remains bound to the aminoacyl-tRNA.EF-Tu.GTP complex up to the GTP hydrolysis stage on the ribosome.</text>
</comment>
<comment type="subcellular location">
    <subcellularLocation>
        <location evidence="1">Cytoplasm</location>
    </subcellularLocation>
</comment>
<comment type="similarity">
    <text evidence="1">Belongs to the EF-Ts family.</text>
</comment>
<evidence type="ECO:0000255" key="1">
    <source>
        <dbReference type="HAMAP-Rule" id="MF_00050"/>
    </source>
</evidence>
<keyword id="KW-0963">Cytoplasm</keyword>
<keyword id="KW-0251">Elongation factor</keyword>
<keyword id="KW-0648">Protein biosynthesis</keyword>
<dbReference type="EMBL" id="AE017221">
    <property type="protein sequence ID" value="AAS80856.1"/>
    <property type="molecule type" value="Genomic_DNA"/>
</dbReference>
<dbReference type="RefSeq" id="WP_011172953.1">
    <property type="nucleotide sequence ID" value="NC_005835.1"/>
</dbReference>
<dbReference type="SMR" id="Q72KD8"/>
<dbReference type="KEGG" id="tth:TT_C0508"/>
<dbReference type="eggNOG" id="COG0264">
    <property type="taxonomic scope" value="Bacteria"/>
</dbReference>
<dbReference type="HOGENOM" id="CLU_047155_1_1_0"/>
<dbReference type="OrthoDB" id="9808348at2"/>
<dbReference type="Proteomes" id="UP000000592">
    <property type="component" value="Chromosome"/>
</dbReference>
<dbReference type="GO" id="GO:0005737">
    <property type="term" value="C:cytoplasm"/>
    <property type="evidence" value="ECO:0007669"/>
    <property type="project" value="UniProtKB-SubCell"/>
</dbReference>
<dbReference type="GO" id="GO:0003746">
    <property type="term" value="F:translation elongation factor activity"/>
    <property type="evidence" value="ECO:0007669"/>
    <property type="project" value="UniProtKB-UniRule"/>
</dbReference>
<dbReference type="CDD" id="cd14275">
    <property type="entry name" value="UBA_EF-Ts"/>
    <property type="match status" value="1"/>
</dbReference>
<dbReference type="FunFam" id="1.10.286.20:FF:000001">
    <property type="entry name" value="Elongation factor Ts"/>
    <property type="match status" value="1"/>
</dbReference>
<dbReference type="FunFam" id="1.10.8.10:FF:000001">
    <property type="entry name" value="Elongation factor Ts"/>
    <property type="match status" value="1"/>
</dbReference>
<dbReference type="Gene3D" id="1.10.286.20">
    <property type="match status" value="1"/>
</dbReference>
<dbReference type="Gene3D" id="1.10.8.10">
    <property type="entry name" value="DNA helicase RuvA subunit, C-terminal domain"/>
    <property type="match status" value="1"/>
</dbReference>
<dbReference type="Gene3D" id="3.30.479.20">
    <property type="entry name" value="Elongation factor Ts, dimerisation domain"/>
    <property type="match status" value="1"/>
</dbReference>
<dbReference type="HAMAP" id="MF_00050">
    <property type="entry name" value="EF_Ts"/>
    <property type="match status" value="1"/>
</dbReference>
<dbReference type="InterPro" id="IPR036402">
    <property type="entry name" value="EF-Ts_dimer_sf"/>
</dbReference>
<dbReference type="InterPro" id="IPR001816">
    <property type="entry name" value="Transl_elong_EFTs/EF1B"/>
</dbReference>
<dbReference type="InterPro" id="IPR014039">
    <property type="entry name" value="Transl_elong_EFTs/EF1B_dimer"/>
</dbReference>
<dbReference type="InterPro" id="IPR018101">
    <property type="entry name" value="Transl_elong_Ts_CS"/>
</dbReference>
<dbReference type="InterPro" id="IPR009060">
    <property type="entry name" value="UBA-like_sf"/>
</dbReference>
<dbReference type="NCBIfam" id="TIGR00116">
    <property type="entry name" value="tsf"/>
    <property type="match status" value="1"/>
</dbReference>
<dbReference type="PANTHER" id="PTHR11741">
    <property type="entry name" value="ELONGATION FACTOR TS"/>
    <property type="match status" value="1"/>
</dbReference>
<dbReference type="PANTHER" id="PTHR11741:SF0">
    <property type="entry name" value="ELONGATION FACTOR TS, MITOCHONDRIAL"/>
    <property type="match status" value="1"/>
</dbReference>
<dbReference type="Pfam" id="PF00889">
    <property type="entry name" value="EF_TS"/>
    <property type="match status" value="1"/>
</dbReference>
<dbReference type="SUPFAM" id="SSF54713">
    <property type="entry name" value="Elongation factor Ts (EF-Ts), dimerisation domain"/>
    <property type="match status" value="1"/>
</dbReference>
<dbReference type="SUPFAM" id="SSF46934">
    <property type="entry name" value="UBA-like"/>
    <property type="match status" value="1"/>
</dbReference>
<dbReference type="PROSITE" id="PS01126">
    <property type="entry name" value="EF_TS_1"/>
    <property type="match status" value="1"/>
</dbReference>
<dbReference type="PROSITE" id="PS01127">
    <property type="entry name" value="EF_TS_2"/>
    <property type="match status" value="1"/>
</dbReference>